<name>Y6200_CANAL</name>
<comment type="function">
    <text evidence="1">Secreted protein that acts as a virulence factor during infections.</text>
</comment>
<comment type="subcellular location">
    <subcellularLocation>
        <location evidence="1">Secreted</location>
    </subcellularLocation>
</comment>
<comment type="induction">
    <text evidence="4 5">Induced in hyphae and up-regulated during oral infection. Expression is higher in white cells.</text>
</comment>
<comment type="disruption phenotype">
    <text evidence="4">reduces capacity to damage oral epithelial cells.</text>
</comment>
<comment type="similarity">
    <text evidence="6">Belongs to the CRISP family.</text>
</comment>
<evidence type="ECO:0000250" key="1"/>
<evidence type="ECO:0000255" key="2"/>
<evidence type="ECO:0000256" key="3">
    <source>
        <dbReference type="SAM" id="MobiDB-lite"/>
    </source>
</evidence>
<evidence type="ECO:0000269" key="4">
    <source>
    </source>
</evidence>
<evidence type="ECO:0000269" key="5">
    <source>
    </source>
</evidence>
<evidence type="ECO:0000305" key="6"/>
<feature type="signal peptide" evidence="2">
    <location>
        <begin position="1"/>
        <end position="23"/>
    </location>
</feature>
<feature type="chain" id="PRO_0000429963" description="Probable pathogenesis-related protein CaO19.6200">
    <location>
        <begin position="24"/>
        <end position="317"/>
    </location>
</feature>
<feature type="domain" description="SCP">
    <location>
        <begin position="187"/>
        <end position="297"/>
    </location>
</feature>
<feature type="region of interest" description="Disordered" evidence="3">
    <location>
        <begin position="52"/>
        <end position="116"/>
    </location>
</feature>
<feature type="region of interest" description="Disordered" evidence="3">
    <location>
        <begin position="155"/>
        <end position="179"/>
    </location>
</feature>
<feature type="compositionally biased region" description="Low complexity" evidence="3">
    <location>
        <begin position="58"/>
        <end position="76"/>
    </location>
</feature>
<feature type="compositionally biased region" description="Polar residues" evidence="3">
    <location>
        <begin position="84"/>
        <end position="116"/>
    </location>
</feature>
<feature type="compositionally biased region" description="Polar residues" evidence="3">
    <location>
        <begin position="168"/>
        <end position="179"/>
    </location>
</feature>
<feature type="glycosylation site" description="N-linked (GlcNAc...) asparagine" evidence="2">
    <location>
        <position position="169"/>
    </location>
</feature>
<reference key="1">
    <citation type="journal article" date="2004" name="Proc. Natl. Acad. Sci. U.S.A.">
        <title>The diploid genome sequence of Candida albicans.</title>
        <authorList>
            <person name="Jones T."/>
            <person name="Federspiel N.A."/>
            <person name="Chibana H."/>
            <person name="Dungan J."/>
            <person name="Kalman S."/>
            <person name="Magee B.B."/>
            <person name="Newport G."/>
            <person name="Thorstenson Y.R."/>
            <person name="Agabian N."/>
            <person name="Magee P.T."/>
            <person name="Davis R.W."/>
            <person name="Scherer S."/>
        </authorList>
    </citation>
    <scope>NUCLEOTIDE SEQUENCE [LARGE SCALE GENOMIC DNA]</scope>
    <source>
        <strain>SC5314 / ATCC MYA-2876</strain>
    </source>
</reference>
<reference key="2">
    <citation type="journal article" date="2007" name="Genome Biol.">
        <title>Assembly of the Candida albicans genome into sixteen supercontigs aligned on the eight chromosomes.</title>
        <authorList>
            <person name="van het Hoog M."/>
            <person name="Rast T.J."/>
            <person name="Martchenko M."/>
            <person name="Grindle S."/>
            <person name="Dignard D."/>
            <person name="Hogues H."/>
            <person name="Cuomo C."/>
            <person name="Berriman M."/>
            <person name="Scherer S."/>
            <person name="Magee B.B."/>
            <person name="Whiteway M."/>
            <person name="Chibana H."/>
            <person name="Nantel A."/>
            <person name="Magee P.T."/>
        </authorList>
    </citation>
    <scope>GENOME REANNOTATION</scope>
    <source>
        <strain>SC5314 / ATCC MYA-2876</strain>
    </source>
</reference>
<reference key="3">
    <citation type="journal article" date="2013" name="Genome Biol.">
        <title>Assembly of a phased diploid Candida albicans genome facilitates allele-specific measurements and provides a simple model for repeat and indel structure.</title>
        <authorList>
            <person name="Muzzey D."/>
            <person name="Schwartz K."/>
            <person name="Weissman J.S."/>
            <person name="Sherlock G."/>
        </authorList>
    </citation>
    <scope>NUCLEOTIDE SEQUENCE [LARGE SCALE GENOMIC DNA]</scope>
    <scope>GENOME REANNOTATION</scope>
    <source>
        <strain>SC5314 / ATCC MYA-2876</strain>
    </source>
</reference>
<reference key="4">
    <citation type="journal article" date="2002" name="Eukaryot. Cell">
        <title>Large-scale identification of putative exported proteins in Candida albicans by genetic selection.</title>
        <authorList>
            <person name="Monteoliva L."/>
            <person name="Matas M.L."/>
            <person name="Gil C."/>
            <person name="Nombela C."/>
            <person name="Pla J."/>
        </authorList>
    </citation>
    <scope>IDENTIFICATION</scope>
    <scope>SUBCELLULAR LOCATION</scope>
</reference>
<reference key="5">
    <citation type="journal article" date="2012" name="PLoS Pathog.">
        <title>The novel Candida albicans transporter Dur31 is a multi-stage pathogenicity factor.</title>
        <authorList>
            <person name="Mayer F.L."/>
            <person name="Wilson D."/>
            <person name="Jacobsen I.D."/>
            <person name="Miramon P."/>
            <person name="Grosse K."/>
            <person name="Hube B."/>
        </authorList>
    </citation>
    <scope>INDUCTION</scope>
    <scope>DISRUPTION PHENOTYPE</scope>
</reference>
<reference key="6">
    <citation type="journal article" date="2013" name="Mol. Microbiol.">
        <title>A family of secreted pathogenesis-related proteins in Candida albicans.</title>
        <authorList>
            <person name="Rohm M."/>
            <person name="Lindemann E."/>
            <person name="Hiller E."/>
            <person name="Ermert D."/>
            <person name="Lemuth K."/>
            <person name="Trkulja D."/>
            <person name="Sogukpinar O."/>
            <person name="Brunner H."/>
            <person name="Rupp S."/>
            <person name="Urban C.F."/>
            <person name="Sohn K."/>
        </authorList>
    </citation>
    <scope>IDENTIFICATION</scope>
    <scope>INDUCTION</scope>
</reference>
<sequence length="317" mass="34075">MKFLQSFPVILAVFSFAANLVSSKLVYEYETKYVTVEIVTIVSGETTYTTERLETNGPTSTTTTIVIPSSKPSSPESKPKSDSQPMFQSPSPVQITPSTTSINNAPSPTKPETTVTASPAVIAHTSVFVVTPNSAPTTSSSPPNIVQQVKAAITPSAPKPQPQPQPQENNSGTNDDSQLSSFSRQILEAHNIKRASHGVNPLTWSNELYNYANKVASSYDCSGNLRHTSGPYGENLALGYSSGANAVSAWYSEGFNFGGAGKLNHFTQVVWKSTTQLGCAYKDCRAKGWGLYIICNYQKPGNIIGQELANILPLIRS</sequence>
<gene>
    <name type="ordered locus">CAALFM_C107040CA</name>
    <name type="ORF">CaO19.13580</name>
    <name type="ORF">CaO19.6200</name>
</gene>
<proteinExistence type="evidence at transcript level"/>
<keyword id="KW-0325">Glycoprotein</keyword>
<keyword id="KW-1185">Reference proteome</keyword>
<keyword id="KW-0964">Secreted</keyword>
<keyword id="KW-0732">Signal</keyword>
<keyword id="KW-0843">Virulence</keyword>
<accession>Q5AB49</accession>
<accession>A0A1D8PDZ9</accession>
<accession>Q5AAW0</accession>
<protein>
    <recommendedName>
        <fullName>Probable pathogenesis-related protein CaO19.6200</fullName>
    </recommendedName>
</protein>
<dbReference type="EMBL" id="CP017623">
    <property type="protein sequence ID" value="AOW26356.1"/>
    <property type="molecule type" value="Genomic_DNA"/>
</dbReference>
<dbReference type="RefSeq" id="XP_718791.1">
    <property type="nucleotide sequence ID" value="XM_713698.1"/>
</dbReference>
<dbReference type="SMR" id="Q5AB49"/>
<dbReference type="FunCoup" id="Q5AB49">
    <property type="interactions" value="57"/>
</dbReference>
<dbReference type="EnsemblFungi" id="C1_07040C_A-T">
    <property type="protein sequence ID" value="C1_07040C_A-T-p1"/>
    <property type="gene ID" value="C1_07040C_A"/>
</dbReference>
<dbReference type="GeneID" id="3639533"/>
<dbReference type="KEGG" id="cal:CAALFM_C107040CA"/>
<dbReference type="CGD" id="CAL0000178383">
    <property type="gene designation" value="orf19.13580"/>
</dbReference>
<dbReference type="VEuPathDB" id="FungiDB:C1_07040C_A"/>
<dbReference type="eggNOG" id="KOG3017">
    <property type="taxonomic scope" value="Eukaryota"/>
</dbReference>
<dbReference type="HOGENOM" id="CLU_035730_3_1_1"/>
<dbReference type="InParanoid" id="Q5AB49"/>
<dbReference type="OrthoDB" id="337038at2759"/>
<dbReference type="PRO" id="PR:Q5AB49"/>
<dbReference type="Proteomes" id="UP000000559">
    <property type="component" value="Chromosome 1"/>
</dbReference>
<dbReference type="GO" id="GO:0005615">
    <property type="term" value="C:extracellular space"/>
    <property type="evidence" value="ECO:0000318"/>
    <property type="project" value="GO_Central"/>
</dbReference>
<dbReference type="GO" id="GO:0019953">
    <property type="term" value="P:sexual reproduction"/>
    <property type="evidence" value="ECO:0000318"/>
    <property type="project" value="GO_Central"/>
</dbReference>
<dbReference type="CDD" id="cd05384">
    <property type="entry name" value="CAP_PRY1-like"/>
    <property type="match status" value="1"/>
</dbReference>
<dbReference type="Gene3D" id="3.40.33.10">
    <property type="entry name" value="CAP"/>
    <property type="match status" value="1"/>
</dbReference>
<dbReference type="InterPro" id="IPR014044">
    <property type="entry name" value="CAP_dom"/>
</dbReference>
<dbReference type="InterPro" id="IPR035940">
    <property type="entry name" value="CAP_sf"/>
</dbReference>
<dbReference type="InterPro" id="IPR001283">
    <property type="entry name" value="CRISP-related"/>
</dbReference>
<dbReference type="PANTHER" id="PTHR10334">
    <property type="entry name" value="CYSTEINE-RICH SECRETORY PROTEIN-RELATED"/>
    <property type="match status" value="1"/>
</dbReference>
<dbReference type="Pfam" id="PF00188">
    <property type="entry name" value="CAP"/>
    <property type="match status" value="1"/>
</dbReference>
<dbReference type="PRINTS" id="PR00837">
    <property type="entry name" value="V5TPXLIKE"/>
</dbReference>
<dbReference type="SMART" id="SM00198">
    <property type="entry name" value="SCP"/>
    <property type="match status" value="1"/>
</dbReference>
<dbReference type="SUPFAM" id="SSF55797">
    <property type="entry name" value="PR-1-like"/>
    <property type="match status" value="1"/>
</dbReference>
<organism>
    <name type="scientific">Candida albicans (strain SC5314 / ATCC MYA-2876)</name>
    <name type="common">Yeast</name>
    <dbReference type="NCBI Taxonomy" id="237561"/>
    <lineage>
        <taxon>Eukaryota</taxon>
        <taxon>Fungi</taxon>
        <taxon>Dikarya</taxon>
        <taxon>Ascomycota</taxon>
        <taxon>Saccharomycotina</taxon>
        <taxon>Pichiomycetes</taxon>
        <taxon>Debaryomycetaceae</taxon>
        <taxon>Candida/Lodderomyces clade</taxon>
        <taxon>Candida</taxon>
    </lineage>
</organism>